<comment type="function">
    <text evidence="1">Produces ATP from ADP in the presence of a proton gradient across the membrane. The gamma chain is believed to be important in regulating ATPase activity and the flow of protons through the CF(0) complex.</text>
</comment>
<comment type="subunit">
    <text evidence="1">F-type ATPases have 2 components, CF(1) - the catalytic core - and CF(0) - the membrane proton channel. CF(1) has five subunits: alpha(3), beta(3), gamma(1), delta(1), epsilon(1). CF(0) has three main subunits: a, b and c.</text>
</comment>
<comment type="subcellular location">
    <subcellularLocation>
        <location evidence="1">Cell inner membrane</location>
        <topology evidence="1">Peripheral membrane protein</topology>
    </subcellularLocation>
</comment>
<comment type="similarity">
    <text evidence="1">Belongs to the ATPase gamma chain family.</text>
</comment>
<name>ATPG_PSESM</name>
<keyword id="KW-0066">ATP synthesis</keyword>
<keyword id="KW-0997">Cell inner membrane</keyword>
<keyword id="KW-1003">Cell membrane</keyword>
<keyword id="KW-0139">CF(1)</keyword>
<keyword id="KW-0375">Hydrogen ion transport</keyword>
<keyword id="KW-0406">Ion transport</keyword>
<keyword id="KW-0472">Membrane</keyword>
<keyword id="KW-1185">Reference proteome</keyword>
<keyword id="KW-0813">Transport</keyword>
<proteinExistence type="inferred from homology"/>
<accession>Q87TT3</accession>
<sequence length="286" mass="31335">MAGAKEIRSKIASIKSTQKITSAMEKVAVSKMRKAQMRMAASRPYAERIRQVIGHLANANPEYLHPFMIERPLKRVGYVVVSSDRGLCGGLNTNLFKTLVKDMAVNRENGVEIDLCVVGSKGAAFFRNFGGNVVAAISHLGEEPSINDLIGSVKVMLDAYLDGRIDRLSVVSNKFINTMTQQPTVEQLIPLVATPDQGLKHHWDYLYEPDAKELLDGLMVRYVESQVYQAVVENNAAEQAARMIAMKNATDNAGDLISDLQLIYNKARQAAITQEISEIVGGAAAV</sequence>
<protein>
    <recommendedName>
        <fullName evidence="1">ATP synthase gamma chain</fullName>
    </recommendedName>
    <alternativeName>
        <fullName evidence="1">ATP synthase F1 sector gamma subunit</fullName>
    </alternativeName>
    <alternativeName>
        <fullName evidence="1">F-ATPase gamma subunit</fullName>
    </alternativeName>
</protein>
<gene>
    <name evidence="1" type="primary">atpG</name>
    <name type="ordered locus">PSPTO_5600</name>
</gene>
<reference key="1">
    <citation type="journal article" date="2003" name="Proc. Natl. Acad. Sci. U.S.A.">
        <title>The complete genome sequence of the Arabidopsis and tomato pathogen Pseudomonas syringae pv. tomato DC3000.</title>
        <authorList>
            <person name="Buell C.R."/>
            <person name="Joardar V."/>
            <person name="Lindeberg M."/>
            <person name="Selengut J."/>
            <person name="Paulsen I.T."/>
            <person name="Gwinn M.L."/>
            <person name="Dodson R.J."/>
            <person name="DeBoy R.T."/>
            <person name="Durkin A.S."/>
            <person name="Kolonay J.F."/>
            <person name="Madupu R."/>
            <person name="Daugherty S.C."/>
            <person name="Brinkac L.M."/>
            <person name="Beanan M.J."/>
            <person name="Haft D.H."/>
            <person name="Nelson W.C."/>
            <person name="Davidsen T.M."/>
            <person name="Zafar N."/>
            <person name="Zhou L."/>
            <person name="Liu J."/>
            <person name="Yuan Q."/>
            <person name="Khouri H.M."/>
            <person name="Fedorova N.B."/>
            <person name="Tran B."/>
            <person name="Russell D."/>
            <person name="Berry K.J."/>
            <person name="Utterback T.R."/>
            <person name="Van Aken S.E."/>
            <person name="Feldblyum T.V."/>
            <person name="D'Ascenzo M."/>
            <person name="Deng W.-L."/>
            <person name="Ramos A.R."/>
            <person name="Alfano J.R."/>
            <person name="Cartinhour S."/>
            <person name="Chatterjee A.K."/>
            <person name="Delaney T.P."/>
            <person name="Lazarowitz S.G."/>
            <person name="Martin G.B."/>
            <person name="Schneider D.J."/>
            <person name="Tang X."/>
            <person name="Bender C.L."/>
            <person name="White O."/>
            <person name="Fraser C.M."/>
            <person name="Collmer A."/>
        </authorList>
    </citation>
    <scope>NUCLEOTIDE SEQUENCE [LARGE SCALE GENOMIC DNA]</scope>
    <source>
        <strain>ATCC BAA-871 / DC3000</strain>
    </source>
</reference>
<dbReference type="EMBL" id="AE016853">
    <property type="protein sequence ID" value="AAO59013.1"/>
    <property type="molecule type" value="Genomic_DNA"/>
</dbReference>
<dbReference type="RefSeq" id="NP_795318.1">
    <property type="nucleotide sequence ID" value="NC_004578.1"/>
</dbReference>
<dbReference type="RefSeq" id="WP_011105591.1">
    <property type="nucleotide sequence ID" value="NC_004578.1"/>
</dbReference>
<dbReference type="SMR" id="Q87TT3"/>
<dbReference type="STRING" id="223283.PSPTO_5600"/>
<dbReference type="GeneID" id="1187292"/>
<dbReference type="KEGG" id="pst:PSPTO_5600"/>
<dbReference type="PATRIC" id="fig|223283.9.peg.5737"/>
<dbReference type="eggNOG" id="COG0224">
    <property type="taxonomic scope" value="Bacteria"/>
</dbReference>
<dbReference type="HOGENOM" id="CLU_050669_0_1_6"/>
<dbReference type="OrthoDB" id="9812769at2"/>
<dbReference type="PhylomeDB" id="Q87TT3"/>
<dbReference type="Proteomes" id="UP000002515">
    <property type="component" value="Chromosome"/>
</dbReference>
<dbReference type="GO" id="GO:0005886">
    <property type="term" value="C:plasma membrane"/>
    <property type="evidence" value="ECO:0007669"/>
    <property type="project" value="UniProtKB-SubCell"/>
</dbReference>
<dbReference type="GO" id="GO:0045259">
    <property type="term" value="C:proton-transporting ATP synthase complex"/>
    <property type="evidence" value="ECO:0007669"/>
    <property type="project" value="UniProtKB-KW"/>
</dbReference>
<dbReference type="GO" id="GO:0005524">
    <property type="term" value="F:ATP binding"/>
    <property type="evidence" value="ECO:0007669"/>
    <property type="project" value="UniProtKB-UniRule"/>
</dbReference>
<dbReference type="GO" id="GO:0046933">
    <property type="term" value="F:proton-transporting ATP synthase activity, rotational mechanism"/>
    <property type="evidence" value="ECO:0007669"/>
    <property type="project" value="UniProtKB-UniRule"/>
</dbReference>
<dbReference type="GO" id="GO:0042777">
    <property type="term" value="P:proton motive force-driven plasma membrane ATP synthesis"/>
    <property type="evidence" value="ECO:0007669"/>
    <property type="project" value="UniProtKB-UniRule"/>
</dbReference>
<dbReference type="CDD" id="cd12151">
    <property type="entry name" value="F1-ATPase_gamma"/>
    <property type="match status" value="1"/>
</dbReference>
<dbReference type="FunFam" id="1.10.287.80:FF:000005">
    <property type="entry name" value="ATP synthase gamma chain"/>
    <property type="match status" value="1"/>
</dbReference>
<dbReference type="FunFam" id="3.40.1380.10:FF:000001">
    <property type="entry name" value="ATP synthase gamma chain"/>
    <property type="match status" value="1"/>
</dbReference>
<dbReference type="Gene3D" id="3.40.1380.10">
    <property type="match status" value="1"/>
</dbReference>
<dbReference type="Gene3D" id="1.10.287.80">
    <property type="entry name" value="ATP synthase, gamma subunit, helix hairpin domain"/>
    <property type="match status" value="1"/>
</dbReference>
<dbReference type="HAMAP" id="MF_00815">
    <property type="entry name" value="ATP_synth_gamma_bact"/>
    <property type="match status" value="1"/>
</dbReference>
<dbReference type="InterPro" id="IPR035968">
    <property type="entry name" value="ATP_synth_F1_ATPase_gsu"/>
</dbReference>
<dbReference type="InterPro" id="IPR000131">
    <property type="entry name" value="ATP_synth_F1_gsu"/>
</dbReference>
<dbReference type="InterPro" id="IPR023632">
    <property type="entry name" value="ATP_synth_F1_gsu_CS"/>
</dbReference>
<dbReference type="NCBIfam" id="TIGR01146">
    <property type="entry name" value="ATPsyn_F1gamma"/>
    <property type="match status" value="1"/>
</dbReference>
<dbReference type="NCBIfam" id="NF004144">
    <property type="entry name" value="PRK05621.1-1"/>
    <property type="match status" value="1"/>
</dbReference>
<dbReference type="PANTHER" id="PTHR11693">
    <property type="entry name" value="ATP SYNTHASE GAMMA CHAIN"/>
    <property type="match status" value="1"/>
</dbReference>
<dbReference type="PANTHER" id="PTHR11693:SF22">
    <property type="entry name" value="ATP SYNTHASE SUBUNIT GAMMA, MITOCHONDRIAL"/>
    <property type="match status" value="1"/>
</dbReference>
<dbReference type="Pfam" id="PF00231">
    <property type="entry name" value="ATP-synt"/>
    <property type="match status" value="1"/>
</dbReference>
<dbReference type="PRINTS" id="PR00126">
    <property type="entry name" value="ATPASEGAMMA"/>
</dbReference>
<dbReference type="SUPFAM" id="SSF52943">
    <property type="entry name" value="ATP synthase (F1-ATPase), gamma subunit"/>
    <property type="match status" value="1"/>
</dbReference>
<dbReference type="PROSITE" id="PS00153">
    <property type="entry name" value="ATPASE_GAMMA"/>
    <property type="match status" value="1"/>
</dbReference>
<evidence type="ECO:0000255" key="1">
    <source>
        <dbReference type="HAMAP-Rule" id="MF_00815"/>
    </source>
</evidence>
<feature type="chain" id="PRO_0000073350" description="ATP synthase gamma chain">
    <location>
        <begin position="1"/>
        <end position="286"/>
    </location>
</feature>
<organism>
    <name type="scientific">Pseudomonas syringae pv. tomato (strain ATCC BAA-871 / DC3000)</name>
    <dbReference type="NCBI Taxonomy" id="223283"/>
    <lineage>
        <taxon>Bacteria</taxon>
        <taxon>Pseudomonadati</taxon>
        <taxon>Pseudomonadota</taxon>
        <taxon>Gammaproteobacteria</taxon>
        <taxon>Pseudomonadales</taxon>
        <taxon>Pseudomonadaceae</taxon>
        <taxon>Pseudomonas</taxon>
    </lineage>
</organism>